<feature type="signal peptide" evidence="1">
    <location>
        <begin position="1"/>
        <end position="20"/>
    </location>
</feature>
<feature type="chain" id="PRO_0000018768" description="Beta-2-microglobulin">
    <location>
        <begin position="21"/>
        <end position="119"/>
    </location>
</feature>
<feature type="domain" description="Ig-like C1-type">
    <location>
        <begin position="25"/>
        <end position="114"/>
    </location>
</feature>
<feature type="disulfide bond" evidence="2">
    <location>
        <begin position="45"/>
        <end position="100"/>
    </location>
</feature>
<feature type="sequence variant" description="In strain: Isolate specimen 1580.">
    <original>R</original>
    <variation>L</variation>
    <location>
        <position position="3"/>
    </location>
</feature>
<feature type="sequence variant" description="In strain: Isolate specimen 1580.">
    <original>A</original>
    <variation>S</variation>
    <location>
        <position position="8"/>
    </location>
</feature>
<dbReference type="EMBL" id="AF032060">
    <property type="protein sequence ID" value="AAC52092.1"/>
    <property type="molecule type" value="Genomic_DNA"/>
</dbReference>
<dbReference type="EMBL" id="AF032059">
    <property type="protein sequence ID" value="AAC52092.1"/>
    <property type="status" value="JOINED"/>
    <property type="molecule type" value="Genomic_DNA"/>
</dbReference>
<dbReference type="EMBL" id="AF032063">
    <property type="protein sequence ID" value="AAC52093.1"/>
    <property type="molecule type" value="Genomic_DNA"/>
</dbReference>
<dbReference type="EMBL" id="AF032062">
    <property type="protein sequence ID" value="AAC52093.1"/>
    <property type="status" value="JOINED"/>
    <property type="molecule type" value="Genomic_DNA"/>
</dbReference>
<dbReference type="SMR" id="O77528"/>
<dbReference type="GO" id="GO:0005576">
    <property type="term" value="C:extracellular region"/>
    <property type="evidence" value="ECO:0007669"/>
    <property type="project" value="UniProtKB-SubCell"/>
</dbReference>
<dbReference type="GO" id="GO:0042612">
    <property type="term" value="C:MHC class I protein complex"/>
    <property type="evidence" value="ECO:0007669"/>
    <property type="project" value="UniProtKB-KW"/>
</dbReference>
<dbReference type="GO" id="GO:0002474">
    <property type="term" value="P:antigen processing and presentation of peptide antigen via MHC class I"/>
    <property type="evidence" value="ECO:0007669"/>
    <property type="project" value="UniProtKB-KW"/>
</dbReference>
<dbReference type="GO" id="GO:0006955">
    <property type="term" value="P:immune response"/>
    <property type="evidence" value="ECO:0007669"/>
    <property type="project" value="InterPro"/>
</dbReference>
<dbReference type="CDD" id="cd05770">
    <property type="entry name" value="IgC1_beta2m"/>
    <property type="match status" value="1"/>
</dbReference>
<dbReference type="FunFam" id="2.60.40.10:FF:001005">
    <property type="entry name" value="Beta-2-microglobulin"/>
    <property type="match status" value="1"/>
</dbReference>
<dbReference type="Gene3D" id="2.60.40.10">
    <property type="entry name" value="Immunoglobulins"/>
    <property type="match status" value="1"/>
</dbReference>
<dbReference type="InterPro" id="IPR015707">
    <property type="entry name" value="B2Microglobulin"/>
</dbReference>
<dbReference type="InterPro" id="IPR007110">
    <property type="entry name" value="Ig-like_dom"/>
</dbReference>
<dbReference type="InterPro" id="IPR036179">
    <property type="entry name" value="Ig-like_dom_sf"/>
</dbReference>
<dbReference type="InterPro" id="IPR013783">
    <property type="entry name" value="Ig-like_fold"/>
</dbReference>
<dbReference type="InterPro" id="IPR003006">
    <property type="entry name" value="Ig/MHC_CS"/>
</dbReference>
<dbReference type="InterPro" id="IPR003597">
    <property type="entry name" value="Ig_C1-set"/>
</dbReference>
<dbReference type="InterPro" id="IPR050160">
    <property type="entry name" value="MHC/Immunoglobulin"/>
</dbReference>
<dbReference type="PANTHER" id="PTHR19944:SF62">
    <property type="entry name" value="BETA-2-MICROGLOBULIN"/>
    <property type="match status" value="1"/>
</dbReference>
<dbReference type="PANTHER" id="PTHR19944">
    <property type="entry name" value="MHC CLASS II-RELATED"/>
    <property type="match status" value="1"/>
</dbReference>
<dbReference type="Pfam" id="PF07654">
    <property type="entry name" value="C1-set"/>
    <property type="match status" value="1"/>
</dbReference>
<dbReference type="SMART" id="SM00407">
    <property type="entry name" value="IGc1"/>
    <property type="match status" value="1"/>
</dbReference>
<dbReference type="SUPFAM" id="SSF48726">
    <property type="entry name" value="Immunoglobulin"/>
    <property type="match status" value="1"/>
</dbReference>
<dbReference type="PROSITE" id="PS50835">
    <property type="entry name" value="IG_LIKE"/>
    <property type="match status" value="1"/>
</dbReference>
<dbReference type="PROSITE" id="PS00290">
    <property type="entry name" value="IG_MHC"/>
    <property type="match status" value="1"/>
</dbReference>
<proteinExistence type="inferred from homology"/>
<sequence length="119" mass="13715">MGRFVAVALLVLLSLSGLETIQHAPKIQVYSRHPAENGKPNFLNCYVSGFHPSDIEVDLLKNGKKIEKVEHSDLSFSKDWSFYLLYYTEFTPNEKDEYACRVSHVTFSTPKTVKWDRNM</sequence>
<name>B2MG_CALPN</name>
<accession>O77528</accession>
<accession>O77527</accession>
<reference key="1">
    <citation type="journal article" date="1998" name="Immunogenetics">
        <title>Beta-2-microglobulin in neotropical primates (Platyrrhini).</title>
        <authorList>
            <person name="Canavez F.C."/>
            <person name="Ladasky J.J."/>
            <person name="Muniz J.A.P.C."/>
            <person name="Seuanez H.N."/>
            <person name="Parham P."/>
        </authorList>
    </citation>
    <scope>NUCLEOTIDE SEQUENCE [GENOMIC DNA]</scope>
    <source>
        <strain>Isolate specimen 1493</strain>
        <strain>Isolate specimen 1580</strain>
        <tissue>Blood</tissue>
    </source>
</reference>
<gene>
    <name type="primary">B2M</name>
</gene>
<protein>
    <recommendedName>
        <fullName>Beta-2-microglobulin</fullName>
    </recommendedName>
</protein>
<keyword id="KW-1015">Disulfide bond</keyword>
<keyword id="KW-0391">Immunity</keyword>
<keyword id="KW-0393">Immunoglobulin domain</keyword>
<keyword id="KW-0490">MHC I</keyword>
<keyword id="KW-0964">Secreted</keyword>
<keyword id="KW-0732">Signal</keyword>
<comment type="function">
    <text evidence="1">Component of the class I major histocompatibility complex (MHC). Involved in the presentation of peptide antigens to the immune system (By similarity).</text>
</comment>
<comment type="subunit">
    <text evidence="1">Heterodimer of an alpha chain and a beta chain. Beta-2-microglobulin is the beta-chain of major histocompatibility complex class I molecules (By similarity).</text>
</comment>
<comment type="subcellular location">
    <subcellularLocation>
        <location evidence="1">Secreted</location>
    </subcellularLocation>
</comment>
<comment type="similarity">
    <text evidence="3">Belongs to the beta-2-microglobulin family.</text>
</comment>
<evidence type="ECO:0000250" key="1"/>
<evidence type="ECO:0000255" key="2">
    <source>
        <dbReference type="PROSITE-ProRule" id="PRU00114"/>
    </source>
</evidence>
<evidence type="ECO:0000305" key="3"/>
<organism>
    <name type="scientific">Callicebus personatus nigrifrons</name>
    <name type="common">Black-fronted titi</name>
    <dbReference type="NCBI Taxonomy" id="78274"/>
    <lineage>
        <taxon>Eukaryota</taxon>
        <taxon>Metazoa</taxon>
        <taxon>Chordata</taxon>
        <taxon>Craniata</taxon>
        <taxon>Vertebrata</taxon>
        <taxon>Euteleostomi</taxon>
        <taxon>Mammalia</taxon>
        <taxon>Eutheria</taxon>
        <taxon>Euarchontoglires</taxon>
        <taxon>Primates</taxon>
        <taxon>Haplorrhini</taxon>
        <taxon>Platyrrhini</taxon>
        <taxon>Pitheciidae</taxon>
        <taxon>Callicebinae</taxon>
        <taxon>Callicebus</taxon>
    </lineage>
</organism>